<comment type="catalytic activity">
    <reaction evidence="1">
        <text>tRNA(Phe) + L-phenylalanine + ATP = L-phenylalanyl-tRNA(Phe) + AMP + diphosphate + H(+)</text>
        <dbReference type="Rhea" id="RHEA:19413"/>
        <dbReference type="Rhea" id="RHEA-COMP:9668"/>
        <dbReference type="Rhea" id="RHEA-COMP:9699"/>
        <dbReference type="ChEBI" id="CHEBI:15378"/>
        <dbReference type="ChEBI" id="CHEBI:30616"/>
        <dbReference type="ChEBI" id="CHEBI:33019"/>
        <dbReference type="ChEBI" id="CHEBI:58095"/>
        <dbReference type="ChEBI" id="CHEBI:78442"/>
        <dbReference type="ChEBI" id="CHEBI:78531"/>
        <dbReference type="ChEBI" id="CHEBI:456215"/>
        <dbReference type="EC" id="6.1.1.20"/>
    </reaction>
</comment>
<comment type="cofactor">
    <cofactor evidence="1">
        <name>Mg(2+)</name>
        <dbReference type="ChEBI" id="CHEBI:18420"/>
    </cofactor>
    <text evidence="1">Binds 2 magnesium ions per tetramer.</text>
</comment>
<comment type="subunit">
    <text evidence="1">Tetramer of two alpha and two beta subunits.</text>
</comment>
<comment type="subcellular location">
    <subcellularLocation>
        <location evidence="1">Cytoplasm</location>
    </subcellularLocation>
</comment>
<comment type="similarity">
    <text evidence="1">Belongs to the class-II aminoacyl-tRNA synthetase family. Phe-tRNA synthetase alpha subunit type 1 subfamily.</text>
</comment>
<dbReference type="EC" id="6.1.1.20" evidence="1"/>
<dbReference type="EMBL" id="CU207211">
    <property type="protein sequence ID" value="CAL61952.1"/>
    <property type="molecule type" value="Genomic_DNA"/>
</dbReference>
<dbReference type="SMR" id="A4G615"/>
<dbReference type="STRING" id="204773.HEAR1797"/>
<dbReference type="KEGG" id="har:HEAR1797"/>
<dbReference type="eggNOG" id="COG0016">
    <property type="taxonomic scope" value="Bacteria"/>
</dbReference>
<dbReference type="HOGENOM" id="CLU_025086_0_1_4"/>
<dbReference type="OrthoDB" id="9800719at2"/>
<dbReference type="Proteomes" id="UP000006697">
    <property type="component" value="Chromosome"/>
</dbReference>
<dbReference type="GO" id="GO:0005737">
    <property type="term" value="C:cytoplasm"/>
    <property type="evidence" value="ECO:0007669"/>
    <property type="project" value="UniProtKB-SubCell"/>
</dbReference>
<dbReference type="GO" id="GO:0005524">
    <property type="term" value="F:ATP binding"/>
    <property type="evidence" value="ECO:0007669"/>
    <property type="project" value="UniProtKB-UniRule"/>
</dbReference>
<dbReference type="GO" id="GO:0000287">
    <property type="term" value="F:magnesium ion binding"/>
    <property type="evidence" value="ECO:0007669"/>
    <property type="project" value="UniProtKB-UniRule"/>
</dbReference>
<dbReference type="GO" id="GO:0004826">
    <property type="term" value="F:phenylalanine-tRNA ligase activity"/>
    <property type="evidence" value="ECO:0007669"/>
    <property type="project" value="UniProtKB-UniRule"/>
</dbReference>
<dbReference type="GO" id="GO:0000049">
    <property type="term" value="F:tRNA binding"/>
    <property type="evidence" value="ECO:0007669"/>
    <property type="project" value="InterPro"/>
</dbReference>
<dbReference type="GO" id="GO:0006432">
    <property type="term" value="P:phenylalanyl-tRNA aminoacylation"/>
    <property type="evidence" value="ECO:0007669"/>
    <property type="project" value="UniProtKB-UniRule"/>
</dbReference>
<dbReference type="CDD" id="cd00496">
    <property type="entry name" value="PheRS_alpha_core"/>
    <property type="match status" value="1"/>
</dbReference>
<dbReference type="FunFam" id="3.30.930.10:FF:000003">
    <property type="entry name" value="Phenylalanine--tRNA ligase alpha subunit"/>
    <property type="match status" value="1"/>
</dbReference>
<dbReference type="Gene3D" id="3.30.930.10">
    <property type="entry name" value="Bira Bifunctional Protein, Domain 2"/>
    <property type="match status" value="1"/>
</dbReference>
<dbReference type="HAMAP" id="MF_00281">
    <property type="entry name" value="Phe_tRNA_synth_alpha1"/>
    <property type="match status" value="1"/>
</dbReference>
<dbReference type="InterPro" id="IPR006195">
    <property type="entry name" value="aa-tRNA-synth_II"/>
</dbReference>
<dbReference type="InterPro" id="IPR045864">
    <property type="entry name" value="aa-tRNA-synth_II/BPL/LPL"/>
</dbReference>
<dbReference type="InterPro" id="IPR004529">
    <property type="entry name" value="Phe-tRNA-synth_IIc_asu"/>
</dbReference>
<dbReference type="InterPro" id="IPR004188">
    <property type="entry name" value="Phe-tRNA_ligase_II_N"/>
</dbReference>
<dbReference type="InterPro" id="IPR022911">
    <property type="entry name" value="Phe_tRNA_ligase_alpha1_bac"/>
</dbReference>
<dbReference type="InterPro" id="IPR002319">
    <property type="entry name" value="Phenylalanyl-tRNA_Synthase"/>
</dbReference>
<dbReference type="InterPro" id="IPR010978">
    <property type="entry name" value="tRNA-bd_arm"/>
</dbReference>
<dbReference type="NCBIfam" id="TIGR00468">
    <property type="entry name" value="pheS"/>
    <property type="match status" value="1"/>
</dbReference>
<dbReference type="PANTHER" id="PTHR11538:SF41">
    <property type="entry name" value="PHENYLALANINE--TRNA LIGASE, MITOCHONDRIAL"/>
    <property type="match status" value="1"/>
</dbReference>
<dbReference type="PANTHER" id="PTHR11538">
    <property type="entry name" value="PHENYLALANYL-TRNA SYNTHETASE"/>
    <property type="match status" value="1"/>
</dbReference>
<dbReference type="Pfam" id="PF02912">
    <property type="entry name" value="Phe_tRNA-synt_N"/>
    <property type="match status" value="1"/>
</dbReference>
<dbReference type="Pfam" id="PF01409">
    <property type="entry name" value="tRNA-synt_2d"/>
    <property type="match status" value="1"/>
</dbReference>
<dbReference type="SUPFAM" id="SSF55681">
    <property type="entry name" value="Class II aaRS and biotin synthetases"/>
    <property type="match status" value="1"/>
</dbReference>
<dbReference type="SUPFAM" id="SSF46589">
    <property type="entry name" value="tRNA-binding arm"/>
    <property type="match status" value="1"/>
</dbReference>
<dbReference type="PROSITE" id="PS50862">
    <property type="entry name" value="AA_TRNA_LIGASE_II"/>
    <property type="match status" value="1"/>
</dbReference>
<evidence type="ECO:0000255" key="1">
    <source>
        <dbReference type="HAMAP-Rule" id="MF_00281"/>
    </source>
</evidence>
<keyword id="KW-0030">Aminoacyl-tRNA synthetase</keyword>
<keyword id="KW-0067">ATP-binding</keyword>
<keyword id="KW-0963">Cytoplasm</keyword>
<keyword id="KW-0436">Ligase</keyword>
<keyword id="KW-0460">Magnesium</keyword>
<keyword id="KW-0479">Metal-binding</keyword>
<keyword id="KW-0547">Nucleotide-binding</keyword>
<keyword id="KW-0648">Protein biosynthesis</keyword>
<keyword id="KW-1185">Reference proteome</keyword>
<protein>
    <recommendedName>
        <fullName evidence="1">Phenylalanine--tRNA ligase alpha subunit</fullName>
        <ecNumber evidence="1">6.1.1.20</ecNumber>
    </recommendedName>
    <alternativeName>
        <fullName evidence="1">Phenylalanyl-tRNA synthetase alpha subunit</fullName>
        <shortName evidence="1">PheRS</shortName>
    </alternativeName>
</protein>
<name>SYFA_HERAR</name>
<reference key="1">
    <citation type="journal article" date="2007" name="PLoS Genet.">
        <title>A tale of two oxidation states: bacterial colonization of arsenic-rich environments.</title>
        <authorList>
            <person name="Muller D."/>
            <person name="Medigue C."/>
            <person name="Koechler S."/>
            <person name="Barbe V."/>
            <person name="Barakat M."/>
            <person name="Talla E."/>
            <person name="Bonnefoy V."/>
            <person name="Krin E."/>
            <person name="Arsene-Ploetze F."/>
            <person name="Carapito C."/>
            <person name="Chandler M."/>
            <person name="Cournoyer B."/>
            <person name="Cruveiller S."/>
            <person name="Dossat C."/>
            <person name="Duval S."/>
            <person name="Heymann M."/>
            <person name="Leize E."/>
            <person name="Lieutaud A."/>
            <person name="Lievremont D."/>
            <person name="Makita Y."/>
            <person name="Mangenot S."/>
            <person name="Nitschke W."/>
            <person name="Ortet P."/>
            <person name="Perdrial N."/>
            <person name="Schoepp B."/>
            <person name="Siguier P."/>
            <person name="Simeonova D.D."/>
            <person name="Rouy Z."/>
            <person name="Segurens B."/>
            <person name="Turlin E."/>
            <person name="Vallenet D."/>
            <person name="van Dorsselaer A."/>
            <person name="Weiss S."/>
            <person name="Weissenbach J."/>
            <person name="Lett M.-C."/>
            <person name="Danchin A."/>
            <person name="Bertin P.N."/>
        </authorList>
    </citation>
    <scope>NUCLEOTIDE SEQUENCE [LARGE SCALE GENOMIC DNA]</scope>
    <source>
        <strain>ULPAs1</strain>
    </source>
</reference>
<gene>
    <name evidence="1" type="primary">pheS</name>
    <name type="ordered locus">HEAR1797</name>
</gene>
<feature type="chain" id="PRO_1000059240" description="Phenylalanine--tRNA ligase alpha subunit">
    <location>
        <begin position="1"/>
        <end position="338"/>
    </location>
</feature>
<feature type="binding site" evidence="1">
    <location>
        <position position="259"/>
    </location>
    <ligand>
        <name>Mg(2+)</name>
        <dbReference type="ChEBI" id="CHEBI:18420"/>
        <note>shared with beta subunit</note>
    </ligand>
</feature>
<proteinExistence type="inferred from homology"/>
<sequence>MNPLDQLVIQAQTDFAAADDAAALENAKAKYLGKTGQITEQMKSLGKLAPDERKTQGAVINSAKEKIEAALTARRDALSNAQMESRLNAEAIDITLPGRGRGTGGIHPVMRTWQRVEEIFGSIGFDVADGPEIENDWTNFTALNSPENHPARSMQDTFYIEGNDTQGKPLLLRTHTSPMQVRYARMNKPPIRVIAPGRTYRVDSDATHSPMFHQVEGLWIDENISFADLKGVYLNFVKAFFETDDLQVRFRPSYFPFTEPSAEIDIAFGSGPLKGRWLEVSGAGQVHPNVMRNMGFDPEQFIGFAFGSGLERLTMLRYGINDLRLFYEGDLRFLKQFN</sequence>
<organism>
    <name type="scientific">Herminiimonas arsenicoxydans</name>
    <dbReference type="NCBI Taxonomy" id="204773"/>
    <lineage>
        <taxon>Bacteria</taxon>
        <taxon>Pseudomonadati</taxon>
        <taxon>Pseudomonadota</taxon>
        <taxon>Betaproteobacteria</taxon>
        <taxon>Burkholderiales</taxon>
        <taxon>Oxalobacteraceae</taxon>
        <taxon>Herminiimonas</taxon>
    </lineage>
</organism>
<accession>A4G615</accession>